<dbReference type="EC" id="1.3.3.11" evidence="1"/>
<dbReference type="EMBL" id="AE004091">
    <property type="protein sequence ID" value="AAG05375.1"/>
    <property type="molecule type" value="Genomic_DNA"/>
</dbReference>
<dbReference type="PIR" id="C83397">
    <property type="entry name" value="C83397"/>
</dbReference>
<dbReference type="RefSeq" id="NP_250677.1">
    <property type="nucleotide sequence ID" value="NC_002516.2"/>
</dbReference>
<dbReference type="RefSeq" id="WP_003111679.1">
    <property type="nucleotide sequence ID" value="NZ_QZGE01000026.1"/>
</dbReference>
<dbReference type="SMR" id="Q9I2C2"/>
<dbReference type="STRING" id="208964.PA1987"/>
<dbReference type="PaxDb" id="208964-PA1987"/>
<dbReference type="GeneID" id="879112"/>
<dbReference type="KEGG" id="pae:PA1987"/>
<dbReference type="PATRIC" id="fig|208964.12.peg.2071"/>
<dbReference type="PseudoCAP" id="PA1987"/>
<dbReference type="HOGENOM" id="CLU_080136_0_0_6"/>
<dbReference type="InParanoid" id="Q9I2C2"/>
<dbReference type="OrthoDB" id="9800756at2"/>
<dbReference type="PhylomeDB" id="Q9I2C2"/>
<dbReference type="BioCyc" id="PAER208964:G1FZ6-2025-MONOMER"/>
<dbReference type="UniPathway" id="UPA00539"/>
<dbReference type="Proteomes" id="UP000002438">
    <property type="component" value="Chromosome"/>
</dbReference>
<dbReference type="GO" id="GO:0033732">
    <property type="term" value="F:pyrroloquinoline-quinone synthase activity"/>
    <property type="evidence" value="ECO:0007669"/>
    <property type="project" value="UniProtKB-EC"/>
</dbReference>
<dbReference type="GO" id="GO:0018189">
    <property type="term" value="P:pyrroloquinoline quinone biosynthetic process"/>
    <property type="evidence" value="ECO:0007669"/>
    <property type="project" value="UniProtKB-UniRule"/>
</dbReference>
<dbReference type="GO" id="GO:0006790">
    <property type="term" value="P:sulfur compound metabolic process"/>
    <property type="evidence" value="ECO:0007669"/>
    <property type="project" value="UniProtKB-ARBA"/>
</dbReference>
<dbReference type="CDD" id="cd19370">
    <property type="entry name" value="TenA_PqqC"/>
    <property type="match status" value="1"/>
</dbReference>
<dbReference type="Gene3D" id="1.20.910.10">
    <property type="entry name" value="Heme oxygenase-like"/>
    <property type="match status" value="1"/>
</dbReference>
<dbReference type="HAMAP" id="MF_00654">
    <property type="entry name" value="PQQ_syn_PqqC"/>
    <property type="match status" value="1"/>
</dbReference>
<dbReference type="InterPro" id="IPR016084">
    <property type="entry name" value="Haem_Oase-like_multi-hlx"/>
</dbReference>
<dbReference type="InterPro" id="IPR011845">
    <property type="entry name" value="PqqC"/>
</dbReference>
<dbReference type="InterPro" id="IPR039068">
    <property type="entry name" value="PqqC-like"/>
</dbReference>
<dbReference type="InterPro" id="IPR004305">
    <property type="entry name" value="Thiaminase-2/PQQC"/>
</dbReference>
<dbReference type="NCBIfam" id="TIGR02111">
    <property type="entry name" value="PQQ_syn_pqqC"/>
    <property type="match status" value="1"/>
</dbReference>
<dbReference type="PANTHER" id="PTHR40279:SF3">
    <property type="entry name" value="4-AMINOBENZOATE SYNTHASE"/>
    <property type="match status" value="1"/>
</dbReference>
<dbReference type="PANTHER" id="PTHR40279">
    <property type="entry name" value="PQQC-LIKE PROTEIN"/>
    <property type="match status" value="1"/>
</dbReference>
<dbReference type="Pfam" id="PF03070">
    <property type="entry name" value="TENA_THI-4"/>
    <property type="match status" value="1"/>
</dbReference>
<dbReference type="SUPFAM" id="SSF48613">
    <property type="entry name" value="Heme oxygenase-like"/>
    <property type="match status" value="1"/>
</dbReference>
<accession>Q9I2C2</accession>
<feature type="chain" id="PRO_0000219982" description="Pyrroloquinoline-quinone synthase">
    <location>
        <begin position="1"/>
        <end position="250"/>
    </location>
</feature>
<keyword id="KW-0560">Oxidoreductase</keyword>
<keyword id="KW-0884">PQQ biosynthesis</keyword>
<keyword id="KW-1185">Reference proteome</keyword>
<name>PQQC_PSEAE</name>
<proteinExistence type="inferred from homology"/>
<gene>
    <name evidence="1" type="primary">pqqC</name>
    <name type="ordered locus">PA1987</name>
</gene>
<comment type="function">
    <text evidence="1">Ring cyclization and eight-electron oxidation of 3a-(2-amino-2-carboxyethyl)-4,5-dioxo-4,5,6,7,8,9-hexahydroquinoline-7,9-dicarboxylic-acid to PQQ.</text>
</comment>
<comment type="catalytic activity">
    <reaction evidence="1">
        <text>6-(2-amino-2-carboxyethyl)-7,8-dioxo-1,2,3,4,7,8-hexahydroquinoline-2,4-dicarboxylate + 3 O2 = pyrroloquinoline quinone + 2 H2O2 + 2 H2O + H(+)</text>
        <dbReference type="Rhea" id="RHEA:10692"/>
        <dbReference type="ChEBI" id="CHEBI:15377"/>
        <dbReference type="ChEBI" id="CHEBI:15378"/>
        <dbReference type="ChEBI" id="CHEBI:15379"/>
        <dbReference type="ChEBI" id="CHEBI:16240"/>
        <dbReference type="ChEBI" id="CHEBI:58442"/>
        <dbReference type="ChEBI" id="CHEBI:58778"/>
        <dbReference type="EC" id="1.3.3.11"/>
    </reaction>
</comment>
<comment type="pathway">
    <text evidence="1">Cofactor biosynthesis; pyrroloquinoline quinone biosynthesis.</text>
</comment>
<comment type="similarity">
    <text evidence="1">Belongs to the PqqC family.</text>
</comment>
<reference key="1">
    <citation type="journal article" date="2000" name="Nature">
        <title>Complete genome sequence of Pseudomonas aeruginosa PAO1, an opportunistic pathogen.</title>
        <authorList>
            <person name="Stover C.K."/>
            <person name="Pham X.-Q.T."/>
            <person name="Erwin A.L."/>
            <person name="Mizoguchi S.D."/>
            <person name="Warrener P."/>
            <person name="Hickey M.J."/>
            <person name="Brinkman F.S.L."/>
            <person name="Hufnagle W.O."/>
            <person name="Kowalik D.J."/>
            <person name="Lagrou M."/>
            <person name="Garber R.L."/>
            <person name="Goltry L."/>
            <person name="Tolentino E."/>
            <person name="Westbrock-Wadman S."/>
            <person name="Yuan Y."/>
            <person name="Brody L.L."/>
            <person name="Coulter S.N."/>
            <person name="Folger K.R."/>
            <person name="Kas A."/>
            <person name="Larbig K."/>
            <person name="Lim R.M."/>
            <person name="Smith K.A."/>
            <person name="Spencer D.H."/>
            <person name="Wong G.K.-S."/>
            <person name="Wu Z."/>
            <person name="Paulsen I.T."/>
            <person name="Reizer J."/>
            <person name="Saier M.H. Jr."/>
            <person name="Hancock R.E.W."/>
            <person name="Lory S."/>
            <person name="Olson M.V."/>
        </authorList>
    </citation>
    <scope>NUCLEOTIDE SEQUENCE [LARGE SCALE GENOMIC DNA]</scope>
    <source>
        <strain>ATCC 15692 / DSM 22644 / CIP 104116 / JCM 14847 / LMG 12228 / 1C / PRS 101 / PAO1</strain>
    </source>
</reference>
<protein>
    <recommendedName>
        <fullName evidence="1">Pyrroloquinoline-quinone synthase</fullName>
        <ecNumber evidence="1">1.3.3.11</ecNumber>
    </recommendedName>
    <alternativeName>
        <fullName evidence="1">Coenzyme PQQ synthesis protein C</fullName>
    </alternativeName>
    <alternativeName>
        <fullName evidence="1">Pyrroloquinoline quinone biosynthesis protein C</fullName>
    </alternativeName>
</protein>
<organism>
    <name type="scientific">Pseudomonas aeruginosa (strain ATCC 15692 / DSM 22644 / CIP 104116 / JCM 14847 / LMG 12228 / 1C / PRS 101 / PAO1)</name>
    <dbReference type="NCBI Taxonomy" id="208964"/>
    <lineage>
        <taxon>Bacteria</taxon>
        <taxon>Pseudomonadati</taxon>
        <taxon>Pseudomonadota</taxon>
        <taxon>Gammaproteobacteria</taxon>
        <taxon>Pseudomonadales</taxon>
        <taxon>Pseudomonadaceae</taxon>
        <taxon>Pseudomonas</taxon>
    </lineage>
</organism>
<evidence type="ECO:0000255" key="1">
    <source>
        <dbReference type="HAMAP-Rule" id="MF_00654"/>
    </source>
</evidence>
<sequence>MSRAAMDRAEFERALRDKGRYYHIHHPFHVAMYEGRASREQIQGWVANRFYYQVNIPLKDAAILANCPDREVRREWIQRILDHDGAPGEAGGIEAWLRLAEAVGLEREQVLSEERVLPGVRFAVDAYVNFARRASWQEAASSSLTELFAPQIHQSRLDSWPRHYPWIEAAGYEYFRSRLAQARRDVEHGLRITLEHYRTREAQERMLDILQFKLDVLWSMLDAMSMAYELERPPYHTVTRERVWHRGLAS</sequence>